<feature type="chain" id="PRO_0000229040" description="1-(5-phosphoribosyl)-5-[(5-phosphoribosylamino)methylideneamino] imidazole-4-carboxamide isomerase">
    <location>
        <begin position="1"/>
        <end position="257"/>
    </location>
</feature>
<feature type="active site" description="Proton acceptor" evidence="1">
    <location>
        <position position="8"/>
    </location>
</feature>
<feature type="active site" description="Proton donor" evidence="1">
    <location>
        <position position="129"/>
    </location>
</feature>
<sequence length="257" mass="27244">MDVIPAIDLLEGRCVRLYQGDYDRSQVFSENPVDVAKQWVDEGATRLHIVDLDGAKAGKVVNLGAIEAIAQAISIPIEIGGGLRDRSSVEQVFNLGVQWAILGTVAVEQPQLVQELCQQYPGQIIIGIDARNGLVATRGWLETSEVLATQLAVQMQEMGAAAIIYTDIHRDGTLAGPNLDALRELAAAISIPVIASGGVSSVTDLLSLLALEPQGVTGVIVGRALYTGDINLKEALQAIGPGRIQDIPPNLDFSSFA</sequence>
<dbReference type="EC" id="5.3.1.16" evidence="1"/>
<dbReference type="EMBL" id="CP000117">
    <property type="protein sequence ID" value="ABA22979.1"/>
    <property type="molecule type" value="Genomic_DNA"/>
</dbReference>
<dbReference type="SMR" id="Q3M7Q7"/>
<dbReference type="STRING" id="240292.Ava_3372"/>
<dbReference type="KEGG" id="ava:Ava_3372"/>
<dbReference type="eggNOG" id="COG0106">
    <property type="taxonomic scope" value="Bacteria"/>
</dbReference>
<dbReference type="HOGENOM" id="CLU_048577_1_1_3"/>
<dbReference type="UniPathway" id="UPA00031">
    <property type="reaction ID" value="UER00009"/>
</dbReference>
<dbReference type="Proteomes" id="UP000002533">
    <property type="component" value="Chromosome"/>
</dbReference>
<dbReference type="GO" id="GO:0005737">
    <property type="term" value="C:cytoplasm"/>
    <property type="evidence" value="ECO:0007669"/>
    <property type="project" value="UniProtKB-SubCell"/>
</dbReference>
<dbReference type="GO" id="GO:0003949">
    <property type="term" value="F:1-(5-phosphoribosyl)-5-[(5-phosphoribosylamino)methylideneamino]imidazole-4-carboxamide isomerase activity"/>
    <property type="evidence" value="ECO:0007669"/>
    <property type="project" value="UniProtKB-UniRule"/>
</dbReference>
<dbReference type="GO" id="GO:0000105">
    <property type="term" value="P:L-histidine biosynthetic process"/>
    <property type="evidence" value="ECO:0007669"/>
    <property type="project" value="UniProtKB-UniRule"/>
</dbReference>
<dbReference type="GO" id="GO:0000162">
    <property type="term" value="P:L-tryptophan biosynthetic process"/>
    <property type="evidence" value="ECO:0007669"/>
    <property type="project" value="TreeGrafter"/>
</dbReference>
<dbReference type="CDD" id="cd04732">
    <property type="entry name" value="HisA"/>
    <property type="match status" value="1"/>
</dbReference>
<dbReference type="FunFam" id="3.20.20.70:FF:000009">
    <property type="entry name" value="1-(5-phosphoribosyl)-5-[(5-phosphoribosylamino)methylideneamino] imidazole-4-carboxamide isomerase"/>
    <property type="match status" value="1"/>
</dbReference>
<dbReference type="Gene3D" id="3.20.20.70">
    <property type="entry name" value="Aldolase class I"/>
    <property type="match status" value="1"/>
</dbReference>
<dbReference type="HAMAP" id="MF_01014">
    <property type="entry name" value="HisA"/>
    <property type="match status" value="1"/>
</dbReference>
<dbReference type="InterPro" id="IPR013785">
    <property type="entry name" value="Aldolase_TIM"/>
</dbReference>
<dbReference type="InterPro" id="IPR006062">
    <property type="entry name" value="His_biosynth"/>
</dbReference>
<dbReference type="InterPro" id="IPR006063">
    <property type="entry name" value="HisA_bact_arch"/>
</dbReference>
<dbReference type="InterPro" id="IPR044524">
    <property type="entry name" value="Isoase_HisA-like"/>
</dbReference>
<dbReference type="InterPro" id="IPR023016">
    <property type="entry name" value="Isoase_HisA-like_bact"/>
</dbReference>
<dbReference type="InterPro" id="IPR011060">
    <property type="entry name" value="RibuloseP-bd_barrel"/>
</dbReference>
<dbReference type="NCBIfam" id="TIGR00007">
    <property type="entry name" value="1-(5-phosphoribosyl)-5-[(5-phosphoribosylamino)methylideneamino]imidazole-4-carboxamide isomerase"/>
    <property type="match status" value="1"/>
</dbReference>
<dbReference type="NCBIfam" id="NF010112">
    <property type="entry name" value="PRK13585.1"/>
    <property type="match status" value="1"/>
</dbReference>
<dbReference type="PANTHER" id="PTHR43090">
    <property type="entry name" value="1-(5-PHOSPHORIBOSYL)-5-[(5-PHOSPHORIBOSYLAMINO)METHYLIDENEAMINO] IMIDAZOLE-4-CARBOXAMIDE ISOMERASE"/>
    <property type="match status" value="1"/>
</dbReference>
<dbReference type="PANTHER" id="PTHR43090:SF2">
    <property type="entry name" value="1-(5-PHOSPHORIBOSYL)-5-[(5-PHOSPHORIBOSYLAMINO)METHYLIDENEAMINO] IMIDAZOLE-4-CARBOXAMIDE ISOMERASE"/>
    <property type="match status" value="1"/>
</dbReference>
<dbReference type="Pfam" id="PF00977">
    <property type="entry name" value="His_biosynth"/>
    <property type="match status" value="1"/>
</dbReference>
<dbReference type="SUPFAM" id="SSF51366">
    <property type="entry name" value="Ribulose-phoshate binding barrel"/>
    <property type="match status" value="1"/>
</dbReference>
<proteinExistence type="inferred from homology"/>
<evidence type="ECO:0000255" key="1">
    <source>
        <dbReference type="HAMAP-Rule" id="MF_01014"/>
    </source>
</evidence>
<organism>
    <name type="scientific">Trichormus variabilis (strain ATCC 29413 / PCC 7937)</name>
    <name type="common">Anabaena variabilis</name>
    <dbReference type="NCBI Taxonomy" id="240292"/>
    <lineage>
        <taxon>Bacteria</taxon>
        <taxon>Bacillati</taxon>
        <taxon>Cyanobacteriota</taxon>
        <taxon>Cyanophyceae</taxon>
        <taxon>Nostocales</taxon>
        <taxon>Nostocaceae</taxon>
        <taxon>Trichormus</taxon>
    </lineage>
</organism>
<gene>
    <name evidence="1" type="primary">hisA</name>
    <name type="ordered locus">Ava_3372</name>
</gene>
<protein>
    <recommendedName>
        <fullName evidence="1">1-(5-phosphoribosyl)-5-[(5-phosphoribosylamino)methylideneamino] imidazole-4-carboxamide isomerase</fullName>
        <ecNumber evidence="1">5.3.1.16</ecNumber>
    </recommendedName>
    <alternativeName>
        <fullName evidence="1">Phosphoribosylformimino-5-aminoimidazole carboxamide ribotide isomerase</fullName>
    </alternativeName>
</protein>
<comment type="catalytic activity">
    <reaction evidence="1">
        <text>1-(5-phospho-beta-D-ribosyl)-5-[(5-phospho-beta-D-ribosylamino)methylideneamino]imidazole-4-carboxamide = 5-[(5-phospho-1-deoxy-D-ribulos-1-ylimino)methylamino]-1-(5-phospho-beta-D-ribosyl)imidazole-4-carboxamide</text>
        <dbReference type="Rhea" id="RHEA:15469"/>
        <dbReference type="ChEBI" id="CHEBI:58435"/>
        <dbReference type="ChEBI" id="CHEBI:58525"/>
        <dbReference type="EC" id="5.3.1.16"/>
    </reaction>
</comment>
<comment type="pathway">
    <text evidence="1">Amino-acid biosynthesis; L-histidine biosynthesis; L-histidine from 5-phospho-alpha-D-ribose 1-diphosphate: step 4/9.</text>
</comment>
<comment type="subcellular location">
    <subcellularLocation>
        <location evidence="1">Cytoplasm</location>
    </subcellularLocation>
</comment>
<comment type="similarity">
    <text evidence="1">Belongs to the HisA/HisF family.</text>
</comment>
<name>HIS4_TRIV2</name>
<accession>Q3M7Q7</accession>
<keyword id="KW-0028">Amino-acid biosynthesis</keyword>
<keyword id="KW-0963">Cytoplasm</keyword>
<keyword id="KW-0368">Histidine biosynthesis</keyword>
<keyword id="KW-0413">Isomerase</keyword>
<reference key="1">
    <citation type="journal article" date="2014" name="Stand. Genomic Sci.">
        <title>Complete genome sequence of Anabaena variabilis ATCC 29413.</title>
        <authorList>
            <person name="Thiel T."/>
            <person name="Pratte B.S."/>
            <person name="Zhong J."/>
            <person name="Goodwin L."/>
            <person name="Copeland A."/>
            <person name="Lucas S."/>
            <person name="Han C."/>
            <person name="Pitluck S."/>
            <person name="Land M.L."/>
            <person name="Kyrpides N.C."/>
            <person name="Woyke T."/>
        </authorList>
    </citation>
    <scope>NUCLEOTIDE SEQUENCE [LARGE SCALE GENOMIC DNA]</scope>
    <source>
        <strain>ATCC 29413 / PCC 7937</strain>
    </source>
</reference>